<name>PLSX_STAA3</name>
<sequence>MVKLAIDMMGGDNAPDIVLEAVQKAVEDFKDLEIILFGDEKKYNLNHERIEFRHCSEKIEMEDEPVRAIKRKKDSSMVKMAEAVKSGEADGCVSAGNTGALMSAGLFIVGRIKGVARPALVVTLPTIDGKGFVFLDVGANADAKPEHLLQYAQLGDIYAQKIRGIDNPKISLLNIGTEPAKGNSLTKKSYELLNHDHSLNFVGNIEAKTLMDGDTDVVVTDGYTGNMVLKNLEGTAKSIGKMLKDTIMSSTKNKLAGAILKKDLAEFAKKMDYSEYGGSVLLGLEGTVVKAHGSSNAKAFYSAIRQAKIAGEQNIVQTMKETVGESNE</sequence>
<evidence type="ECO:0000255" key="1">
    <source>
        <dbReference type="HAMAP-Rule" id="MF_00019"/>
    </source>
</evidence>
<keyword id="KW-0963">Cytoplasm</keyword>
<keyword id="KW-0444">Lipid biosynthesis</keyword>
<keyword id="KW-0443">Lipid metabolism</keyword>
<keyword id="KW-0594">Phospholipid biosynthesis</keyword>
<keyword id="KW-1208">Phospholipid metabolism</keyword>
<keyword id="KW-0808">Transferase</keyword>
<comment type="function">
    <text evidence="1">Catalyzes the reversible formation of acyl-phosphate (acyl-PO(4)) from acyl-[acyl-carrier-protein] (acyl-ACP). This enzyme utilizes acyl-ACP as fatty acyl donor, but not acyl-CoA.</text>
</comment>
<comment type="catalytic activity">
    <reaction evidence="1">
        <text>a fatty acyl-[ACP] + phosphate = an acyl phosphate + holo-[ACP]</text>
        <dbReference type="Rhea" id="RHEA:42292"/>
        <dbReference type="Rhea" id="RHEA-COMP:9685"/>
        <dbReference type="Rhea" id="RHEA-COMP:14125"/>
        <dbReference type="ChEBI" id="CHEBI:43474"/>
        <dbReference type="ChEBI" id="CHEBI:59918"/>
        <dbReference type="ChEBI" id="CHEBI:64479"/>
        <dbReference type="ChEBI" id="CHEBI:138651"/>
        <dbReference type="EC" id="2.3.1.274"/>
    </reaction>
</comment>
<comment type="pathway">
    <text evidence="1">Lipid metabolism; phospholipid metabolism.</text>
</comment>
<comment type="subunit">
    <text evidence="1">Homodimer. Probably interacts with PlsY.</text>
</comment>
<comment type="subcellular location">
    <subcellularLocation>
        <location evidence="1">Cytoplasm</location>
    </subcellularLocation>
    <text evidence="1">Associated with the membrane possibly through PlsY.</text>
</comment>
<comment type="similarity">
    <text evidence="1">Belongs to the PlsX family.</text>
</comment>
<feature type="chain" id="PRO_1000001837" description="Phosphate acyltransferase">
    <location>
        <begin position="1"/>
        <end position="328"/>
    </location>
</feature>
<accession>Q2FHK9</accession>
<reference key="1">
    <citation type="journal article" date="2006" name="Lancet">
        <title>Complete genome sequence of USA300, an epidemic clone of community-acquired meticillin-resistant Staphylococcus aureus.</title>
        <authorList>
            <person name="Diep B.A."/>
            <person name="Gill S.R."/>
            <person name="Chang R.F."/>
            <person name="Phan T.H."/>
            <person name="Chen J.H."/>
            <person name="Davidson M.G."/>
            <person name="Lin F."/>
            <person name="Lin J."/>
            <person name="Carleton H.A."/>
            <person name="Mongodin E.F."/>
            <person name="Sensabaugh G.F."/>
            <person name="Perdreau-Remington F."/>
        </authorList>
    </citation>
    <scope>NUCLEOTIDE SEQUENCE [LARGE SCALE GENOMIC DNA]</scope>
    <source>
        <strain>USA300</strain>
    </source>
</reference>
<organism>
    <name type="scientific">Staphylococcus aureus (strain USA300)</name>
    <dbReference type="NCBI Taxonomy" id="367830"/>
    <lineage>
        <taxon>Bacteria</taxon>
        <taxon>Bacillati</taxon>
        <taxon>Bacillota</taxon>
        <taxon>Bacilli</taxon>
        <taxon>Bacillales</taxon>
        <taxon>Staphylococcaceae</taxon>
        <taxon>Staphylococcus</taxon>
    </lineage>
</organism>
<proteinExistence type="inferred from homology"/>
<dbReference type="EC" id="2.3.1.274" evidence="1"/>
<dbReference type="EMBL" id="CP000255">
    <property type="protein sequence ID" value="ABD20775.1"/>
    <property type="molecule type" value="Genomic_DNA"/>
</dbReference>
<dbReference type="RefSeq" id="WP_000239744.1">
    <property type="nucleotide sequence ID" value="NZ_CP027476.1"/>
</dbReference>
<dbReference type="SMR" id="Q2FHK9"/>
<dbReference type="KEGG" id="saa:SAUSA300_1122"/>
<dbReference type="HOGENOM" id="CLU_039379_1_1_9"/>
<dbReference type="OMA" id="HGKSNAR"/>
<dbReference type="UniPathway" id="UPA00085"/>
<dbReference type="Proteomes" id="UP000001939">
    <property type="component" value="Chromosome"/>
</dbReference>
<dbReference type="GO" id="GO:0005737">
    <property type="term" value="C:cytoplasm"/>
    <property type="evidence" value="ECO:0007669"/>
    <property type="project" value="UniProtKB-SubCell"/>
</dbReference>
<dbReference type="GO" id="GO:0043811">
    <property type="term" value="F:phosphate:acyl-[acyl carrier protein] acyltransferase activity"/>
    <property type="evidence" value="ECO:0007669"/>
    <property type="project" value="UniProtKB-UniRule"/>
</dbReference>
<dbReference type="GO" id="GO:0006633">
    <property type="term" value="P:fatty acid biosynthetic process"/>
    <property type="evidence" value="ECO:0007669"/>
    <property type="project" value="UniProtKB-UniRule"/>
</dbReference>
<dbReference type="GO" id="GO:0008654">
    <property type="term" value="P:phospholipid biosynthetic process"/>
    <property type="evidence" value="ECO:0007669"/>
    <property type="project" value="UniProtKB-KW"/>
</dbReference>
<dbReference type="Gene3D" id="3.40.718.10">
    <property type="entry name" value="Isopropylmalate Dehydrogenase"/>
    <property type="match status" value="1"/>
</dbReference>
<dbReference type="HAMAP" id="MF_00019">
    <property type="entry name" value="PlsX"/>
    <property type="match status" value="1"/>
</dbReference>
<dbReference type="InterPro" id="IPR003664">
    <property type="entry name" value="FA_synthesis"/>
</dbReference>
<dbReference type="InterPro" id="IPR012281">
    <property type="entry name" value="Phospholipid_synth_PlsX-like"/>
</dbReference>
<dbReference type="NCBIfam" id="TIGR00182">
    <property type="entry name" value="plsX"/>
    <property type="match status" value="1"/>
</dbReference>
<dbReference type="PANTHER" id="PTHR30100">
    <property type="entry name" value="FATTY ACID/PHOSPHOLIPID SYNTHESIS PROTEIN PLSX"/>
    <property type="match status" value="1"/>
</dbReference>
<dbReference type="PANTHER" id="PTHR30100:SF1">
    <property type="entry name" value="PHOSPHATE ACYLTRANSFERASE"/>
    <property type="match status" value="1"/>
</dbReference>
<dbReference type="Pfam" id="PF02504">
    <property type="entry name" value="FA_synthesis"/>
    <property type="match status" value="1"/>
</dbReference>
<dbReference type="PIRSF" id="PIRSF002465">
    <property type="entry name" value="Phsphlp_syn_PlsX"/>
    <property type="match status" value="1"/>
</dbReference>
<dbReference type="SUPFAM" id="SSF53659">
    <property type="entry name" value="Isocitrate/Isopropylmalate dehydrogenase-like"/>
    <property type="match status" value="1"/>
</dbReference>
<gene>
    <name evidence="1" type="primary">plsX</name>
    <name type="ordered locus">SAUSA300_1122</name>
</gene>
<protein>
    <recommendedName>
        <fullName evidence="1">Phosphate acyltransferase</fullName>
        <ecNumber evidence="1">2.3.1.274</ecNumber>
    </recommendedName>
    <alternativeName>
        <fullName evidence="1">Acyl-ACP phosphotransacylase</fullName>
    </alternativeName>
    <alternativeName>
        <fullName evidence="1">Acyl-[acyl-carrier-protein]--phosphate acyltransferase</fullName>
    </alternativeName>
    <alternativeName>
        <fullName evidence="1">Phosphate-acyl-ACP acyltransferase</fullName>
    </alternativeName>
</protein>